<dbReference type="EMBL" id="AP004728">
    <property type="protein sequence ID" value="BAD37703.1"/>
    <property type="molecule type" value="Genomic_DNA"/>
</dbReference>
<dbReference type="EMBL" id="AP008212">
    <property type="protein sequence ID" value="BAF19586.1"/>
    <property type="molecule type" value="Genomic_DNA"/>
</dbReference>
<dbReference type="EMBL" id="AP014962">
    <property type="protein sequence ID" value="BAS97851.1"/>
    <property type="molecule type" value="Genomic_DNA"/>
</dbReference>
<dbReference type="EMBL" id="CM000143">
    <property type="protein sequence ID" value="EEE65748.1"/>
    <property type="molecule type" value="Genomic_DNA"/>
</dbReference>
<dbReference type="EMBL" id="AK103574">
    <property type="protein sequence ID" value="BAG96148.1"/>
    <property type="molecule type" value="mRNA"/>
</dbReference>
<dbReference type="RefSeq" id="XP_015643958.1">
    <property type="nucleotide sequence ID" value="XM_015788472.1"/>
</dbReference>
<dbReference type="SMR" id="Q67VW6"/>
<dbReference type="FunCoup" id="Q67VW6">
    <property type="interactions" value="1775"/>
</dbReference>
<dbReference type="STRING" id="39947.Q67VW6"/>
<dbReference type="iPTMnet" id="Q67VW6"/>
<dbReference type="PaxDb" id="39947-Q67VW6"/>
<dbReference type="EnsemblPlants" id="Os06t0489200-01">
    <property type="protein sequence ID" value="Os06t0489200-01"/>
    <property type="gene ID" value="Os06g0489200"/>
</dbReference>
<dbReference type="Gramene" id="Os06t0489200-01">
    <property type="protein sequence ID" value="Os06t0489200-01"/>
    <property type="gene ID" value="Os06g0489200"/>
</dbReference>
<dbReference type="KEGG" id="dosa:Os06g0489200"/>
<dbReference type="eggNOG" id="KOG2138">
    <property type="taxonomic scope" value="Eukaryota"/>
</dbReference>
<dbReference type="HOGENOM" id="CLU_008613_0_0_1"/>
<dbReference type="InParanoid" id="Q67VW6"/>
<dbReference type="OMA" id="DQQKPDT"/>
<dbReference type="OrthoDB" id="20507at2759"/>
<dbReference type="Proteomes" id="UP000000763">
    <property type="component" value="Chromosome 6"/>
</dbReference>
<dbReference type="Proteomes" id="UP000007752">
    <property type="component" value="Chromosome 6"/>
</dbReference>
<dbReference type="Proteomes" id="UP000059680">
    <property type="component" value="Chromosome 6"/>
</dbReference>
<dbReference type="GO" id="GO:0005634">
    <property type="term" value="C:nucleus"/>
    <property type="evidence" value="ECO:0000318"/>
    <property type="project" value="GO_Central"/>
</dbReference>
<dbReference type="GO" id="GO:0070883">
    <property type="term" value="F:pre-miRNA binding"/>
    <property type="evidence" value="ECO:0007669"/>
    <property type="project" value="EnsemblPlants"/>
</dbReference>
<dbReference type="GO" id="GO:0070878">
    <property type="term" value="F:primary miRNA binding"/>
    <property type="evidence" value="ECO:0007669"/>
    <property type="project" value="EnsemblPlants"/>
</dbReference>
<dbReference type="GO" id="GO:0003723">
    <property type="term" value="F:RNA binding"/>
    <property type="evidence" value="ECO:0000318"/>
    <property type="project" value="GO_Central"/>
</dbReference>
<dbReference type="GO" id="GO:0035196">
    <property type="term" value="P:miRNA processing"/>
    <property type="evidence" value="ECO:0007669"/>
    <property type="project" value="EnsemblPlants"/>
</dbReference>
<dbReference type="GO" id="GO:0006397">
    <property type="term" value="P:mRNA processing"/>
    <property type="evidence" value="ECO:0007669"/>
    <property type="project" value="UniProtKB-KW"/>
</dbReference>
<dbReference type="GO" id="GO:0010087">
    <property type="term" value="P:phloem or xylem histogenesis"/>
    <property type="evidence" value="ECO:0007669"/>
    <property type="project" value="EnsemblPlants"/>
</dbReference>
<dbReference type="GO" id="GO:0030422">
    <property type="term" value="P:siRNA processing"/>
    <property type="evidence" value="ECO:0007669"/>
    <property type="project" value="EnsemblPlants"/>
</dbReference>
<dbReference type="FunFam" id="1.10.10.790:FF:000012">
    <property type="entry name" value="G patch domain-containing protein TGH"/>
    <property type="match status" value="1"/>
</dbReference>
<dbReference type="Gene3D" id="1.10.10.790">
    <property type="entry name" value="Surp module"/>
    <property type="match status" value="1"/>
</dbReference>
<dbReference type="InterPro" id="IPR011666">
    <property type="entry name" value="DUF1604"/>
</dbReference>
<dbReference type="InterPro" id="IPR000467">
    <property type="entry name" value="G_patch_dom"/>
</dbReference>
<dbReference type="InterPro" id="IPR000061">
    <property type="entry name" value="Surp"/>
</dbReference>
<dbReference type="InterPro" id="IPR035967">
    <property type="entry name" value="SWAP/Surp_sf"/>
</dbReference>
<dbReference type="PANTHER" id="PTHR13384">
    <property type="entry name" value="G PATCH DOMAIN-CONTAINING PROTEIN 1"/>
    <property type="match status" value="1"/>
</dbReference>
<dbReference type="PANTHER" id="PTHR13384:SF19">
    <property type="entry name" value="G PATCH DOMAIN-CONTAINING PROTEIN 1"/>
    <property type="match status" value="1"/>
</dbReference>
<dbReference type="Pfam" id="PF07713">
    <property type="entry name" value="DUF1604"/>
    <property type="match status" value="1"/>
</dbReference>
<dbReference type="Pfam" id="PF01805">
    <property type="entry name" value="Surp"/>
    <property type="match status" value="1"/>
</dbReference>
<dbReference type="SMART" id="SM00648">
    <property type="entry name" value="SWAP"/>
    <property type="match status" value="1"/>
</dbReference>
<dbReference type="SUPFAM" id="SSF109905">
    <property type="entry name" value="Surp module (SWAP domain)"/>
    <property type="match status" value="1"/>
</dbReference>
<dbReference type="PROSITE" id="PS50174">
    <property type="entry name" value="G_PATCH"/>
    <property type="match status" value="1"/>
</dbReference>
<dbReference type="PROSITE" id="PS50128">
    <property type="entry name" value="SURP"/>
    <property type="match status" value="1"/>
</dbReference>
<sequence length="984" mass="111299">MGFDDDDEDLVVYGTPIEREEDTSARKRRAVAEAGQLRALPAWKQEVRDEEGRRRFHGAFTGGFSAGYYNTVGTKEGWTPQTFTSSRKNRAEMKKQSIYSFLDEEDIKDMGGNALETSQQYDTFGFTATEHARKQASKEQKERPSAIPGPIPDELVVPATTSIGVKLLMKMGWRQGRSIRDAHADSLYESRREARKAFLALSGTKTGGQKIQVDSHKSDKDDGATESFEELHASGNTPVYVLHPKQDLHGLGFDPFKHAPEFKDRKRLQKSARDRNRSDVSMRGSLLISNSGQYAPGFGIGALEELGVEDEDIYASGFAYEQMEVDIEPSKTASDSNYKLEDRKRGVFLAFKIASSSEYKLERFDPPEIPSDFDGRHKFLTPRQDVNNLSDLAPPEVPAPEDTSLRLLIEGCAAMVARCGKHIEDFYKEKSKTNTQFNFLNEGDGCSYYARKLWEYQQKYIDQQKPDTVQSKSSDKLTAENRGKILGERPLDRSTKSSSSSFPAKEAIQLQSNLADNFVKPISLDGLPEYEKPFRNDPAKQARFEQFLKDKYQGGLRPANLIPTSTMSDVDRARERLDFEAAAETIEKGKEKKAMDPLSLLGLSGINEQRFVSSTESERSIPARDEKSIYPRREEFEWRPSPILCKRFDIVDPFMGKPFHVQRPRSKMDSLIFMSESTTRTNEVESSSIAPQHTSVAGATETEAKGAATDPEIESSSVQRPVDLYKAIFSDDSDDDMAEPLANQPVDPVKTSEDANMVLNRLVAEDFLESLGKELGLDVPPEKPTPPNVLFRSETPSTANAIGISRNRKAITCQEIKENESALDKEEIANASADVPSDNVEELGLKYEKQEHRAEKSRSRSSHRQTQSGSLDSDSTSDQHRSRERRSRHKIRSGTPGSDSSIEHHRSKKRKSHSKHRTRRSRSPYADSSDSQYTKRKHREKRHHRTRNPDTDSSDHEYEERHKSSSRRSSDKDRSRRRSRHHKR</sequence>
<organism>
    <name type="scientific">Oryza sativa subsp. japonica</name>
    <name type="common">Rice</name>
    <dbReference type="NCBI Taxonomy" id="39947"/>
    <lineage>
        <taxon>Eukaryota</taxon>
        <taxon>Viridiplantae</taxon>
        <taxon>Streptophyta</taxon>
        <taxon>Embryophyta</taxon>
        <taxon>Tracheophyta</taxon>
        <taxon>Spermatophyta</taxon>
        <taxon>Magnoliopsida</taxon>
        <taxon>Liliopsida</taxon>
        <taxon>Poales</taxon>
        <taxon>Poaceae</taxon>
        <taxon>BOP clade</taxon>
        <taxon>Oryzoideae</taxon>
        <taxon>Oryzeae</taxon>
        <taxon>Oryzinae</taxon>
        <taxon>Oryza</taxon>
        <taxon>Oryza sativa</taxon>
    </lineage>
</organism>
<accession>Q67VW6</accession>
<accession>A0A0P0WX43</accession>
<name>TGHH_ORYSJ</name>
<gene>
    <name evidence="8" type="ordered locus">Os06g0489200</name>
    <name evidence="6" type="ordered locus">LOC_Os06g29400</name>
    <name evidence="9" type="ORF">OsJ_21406</name>
    <name evidence="7" type="ORF">P0583E12.23</name>
</gene>
<comment type="function">
    <text evidence="1">Functions as a component of microRNA (miRNA) and small interfering RNA (siRNA) biogenesis. May assist Dicer-like (DCL) proteins to efficiently process and/or recruit the precursors of miRNAs and siRNAs.</text>
</comment>
<comment type="subcellular location">
    <subcellularLocation>
        <location evidence="1">Nucleus</location>
    </subcellularLocation>
</comment>
<reference key="1">
    <citation type="journal article" date="2005" name="Nature">
        <title>The map-based sequence of the rice genome.</title>
        <authorList>
            <consortium name="International rice genome sequencing project (IRGSP)"/>
        </authorList>
    </citation>
    <scope>NUCLEOTIDE SEQUENCE [LARGE SCALE GENOMIC DNA]</scope>
    <source>
        <strain>cv. Nipponbare</strain>
    </source>
</reference>
<reference key="2">
    <citation type="journal article" date="2008" name="Nucleic Acids Res.">
        <title>The rice annotation project database (RAP-DB): 2008 update.</title>
        <authorList>
            <consortium name="The rice annotation project (RAP)"/>
        </authorList>
    </citation>
    <scope>GENOME REANNOTATION</scope>
    <source>
        <strain>cv. Nipponbare</strain>
    </source>
</reference>
<reference key="3">
    <citation type="journal article" date="2013" name="Rice">
        <title>Improvement of the Oryza sativa Nipponbare reference genome using next generation sequence and optical map data.</title>
        <authorList>
            <person name="Kawahara Y."/>
            <person name="de la Bastide M."/>
            <person name="Hamilton J.P."/>
            <person name="Kanamori H."/>
            <person name="McCombie W.R."/>
            <person name="Ouyang S."/>
            <person name="Schwartz D.C."/>
            <person name="Tanaka T."/>
            <person name="Wu J."/>
            <person name="Zhou S."/>
            <person name="Childs K.L."/>
            <person name="Davidson R.M."/>
            <person name="Lin H."/>
            <person name="Quesada-Ocampo L."/>
            <person name="Vaillancourt B."/>
            <person name="Sakai H."/>
            <person name="Lee S.S."/>
            <person name="Kim J."/>
            <person name="Numa H."/>
            <person name="Itoh T."/>
            <person name="Buell C.R."/>
            <person name="Matsumoto T."/>
        </authorList>
    </citation>
    <scope>GENOME REANNOTATION</scope>
    <source>
        <strain>cv. Nipponbare</strain>
    </source>
</reference>
<reference key="4">
    <citation type="journal article" date="2005" name="PLoS Biol.">
        <title>The genomes of Oryza sativa: a history of duplications.</title>
        <authorList>
            <person name="Yu J."/>
            <person name="Wang J."/>
            <person name="Lin W."/>
            <person name="Li S."/>
            <person name="Li H."/>
            <person name="Zhou J."/>
            <person name="Ni P."/>
            <person name="Dong W."/>
            <person name="Hu S."/>
            <person name="Zeng C."/>
            <person name="Zhang J."/>
            <person name="Zhang Y."/>
            <person name="Li R."/>
            <person name="Xu Z."/>
            <person name="Li S."/>
            <person name="Li X."/>
            <person name="Zheng H."/>
            <person name="Cong L."/>
            <person name="Lin L."/>
            <person name="Yin J."/>
            <person name="Geng J."/>
            <person name="Li G."/>
            <person name="Shi J."/>
            <person name="Liu J."/>
            <person name="Lv H."/>
            <person name="Li J."/>
            <person name="Wang J."/>
            <person name="Deng Y."/>
            <person name="Ran L."/>
            <person name="Shi X."/>
            <person name="Wang X."/>
            <person name="Wu Q."/>
            <person name="Li C."/>
            <person name="Ren X."/>
            <person name="Wang J."/>
            <person name="Wang X."/>
            <person name="Li D."/>
            <person name="Liu D."/>
            <person name="Zhang X."/>
            <person name="Ji Z."/>
            <person name="Zhao W."/>
            <person name="Sun Y."/>
            <person name="Zhang Z."/>
            <person name="Bao J."/>
            <person name="Han Y."/>
            <person name="Dong L."/>
            <person name="Ji J."/>
            <person name="Chen P."/>
            <person name="Wu S."/>
            <person name="Liu J."/>
            <person name="Xiao Y."/>
            <person name="Bu D."/>
            <person name="Tan J."/>
            <person name="Yang L."/>
            <person name="Ye C."/>
            <person name="Zhang J."/>
            <person name="Xu J."/>
            <person name="Zhou Y."/>
            <person name="Yu Y."/>
            <person name="Zhang B."/>
            <person name="Zhuang S."/>
            <person name="Wei H."/>
            <person name="Liu B."/>
            <person name="Lei M."/>
            <person name="Yu H."/>
            <person name="Li Y."/>
            <person name="Xu H."/>
            <person name="Wei S."/>
            <person name="He X."/>
            <person name="Fang L."/>
            <person name="Zhang Z."/>
            <person name="Zhang Y."/>
            <person name="Huang X."/>
            <person name="Su Z."/>
            <person name="Tong W."/>
            <person name="Li J."/>
            <person name="Tong Z."/>
            <person name="Li S."/>
            <person name="Ye J."/>
            <person name="Wang L."/>
            <person name="Fang L."/>
            <person name="Lei T."/>
            <person name="Chen C.-S."/>
            <person name="Chen H.-C."/>
            <person name="Xu Z."/>
            <person name="Li H."/>
            <person name="Huang H."/>
            <person name="Zhang F."/>
            <person name="Xu H."/>
            <person name="Li N."/>
            <person name="Zhao C."/>
            <person name="Li S."/>
            <person name="Dong L."/>
            <person name="Huang Y."/>
            <person name="Li L."/>
            <person name="Xi Y."/>
            <person name="Qi Q."/>
            <person name="Li W."/>
            <person name="Zhang B."/>
            <person name="Hu W."/>
            <person name="Zhang Y."/>
            <person name="Tian X."/>
            <person name="Jiao Y."/>
            <person name="Liang X."/>
            <person name="Jin J."/>
            <person name="Gao L."/>
            <person name="Zheng W."/>
            <person name="Hao B."/>
            <person name="Liu S.-M."/>
            <person name="Wang W."/>
            <person name="Yuan L."/>
            <person name="Cao M."/>
            <person name="McDermott J."/>
            <person name="Samudrala R."/>
            <person name="Wang J."/>
            <person name="Wong G.K.-S."/>
            <person name="Yang H."/>
        </authorList>
    </citation>
    <scope>NUCLEOTIDE SEQUENCE [LARGE SCALE GENOMIC DNA]</scope>
    <source>
        <strain>cv. Nipponbare</strain>
    </source>
</reference>
<reference key="5">
    <citation type="journal article" date="2003" name="Science">
        <title>Collection, mapping, and annotation of over 28,000 cDNA clones from japonica rice.</title>
        <authorList>
            <consortium name="The rice full-length cDNA consortium"/>
        </authorList>
    </citation>
    <scope>NUCLEOTIDE SEQUENCE [LARGE SCALE MRNA]</scope>
    <source>
        <strain>cv. Nipponbare</strain>
    </source>
</reference>
<evidence type="ECO:0000250" key="1">
    <source>
        <dbReference type="UniProtKB" id="Q8GXN9"/>
    </source>
</evidence>
<evidence type="ECO:0000255" key="2"/>
<evidence type="ECO:0000255" key="3">
    <source>
        <dbReference type="PROSITE-ProRule" id="PRU00092"/>
    </source>
</evidence>
<evidence type="ECO:0000255" key="4">
    <source>
        <dbReference type="PROSITE-ProRule" id="PRU00263"/>
    </source>
</evidence>
<evidence type="ECO:0000256" key="5">
    <source>
        <dbReference type="SAM" id="MobiDB-lite"/>
    </source>
</evidence>
<evidence type="ECO:0000305" key="6"/>
<evidence type="ECO:0000312" key="7">
    <source>
        <dbReference type="EMBL" id="BAD37703.1"/>
    </source>
</evidence>
<evidence type="ECO:0000312" key="8">
    <source>
        <dbReference type="EMBL" id="BAF19586.1"/>
    </source>
</evidence>
<evidence type="ECO:0000312" key="9">
    <source>
        <dbReference type="EMBL" id="EEE65748.1"/>
    </source>
</evidence>
<feature type="chain" id="PRO_0000431423" description="G patch domain-containing protein TGH homolog">
    <location>
        <begin position="1"/>
        <end position="984"/>
    </location>
</feature>
<feature type="domain" description="G-patch" evidence="3">
    <location>
        <begin position="160"/>
        <end position="202"/>
    </location>
</feature>
<feature type="repeat" description="SURP motif" evidence="4">
    <location>
        <begin position="408"/>
        <end position="450"/>
    </location>
</feature>
<feature type="region of interest" description="Disordered" evidence="5">
    <location>
        <begin position="130"/>
        <end position="153"/>
    </location>
</feature>
<feature type="region of interest" description="Disordered" evidence="5">
    <location>
        <begin position="464"/>
        <end position="503"/>
    </location>
</feature>
<feature type="region of interest" description="Disordered" evidence="5">
    <location>
        <begin position="679"/>
        <end position="717"/>
    </location>
</feature>
<feature type="region of interest" description="Disordered" evidence="5">
    <location>
        <begin position="775"/>
        <end position="806"/>
    </location>
</feature>
<feature type="region of interest" description="Disordered" evidence="5">
    <location>
        <begin position="820"/>
        <end position="984"/>
    </location>
</feature>
<feature type="coiled-coil region" evidence="2">
    <location>
        <begin position="814"/>
        <end position="859"/>
    </location>
</feature>
<feature type="compositionally biased region" description="Basic and acidic residues" evidence="5">
    <location>
        <begin position="130"/>
        <end position="144"/>
    </location>
</feature>
<feature type="compositionally biased region" description="Basic and acidic residues" evidence="5">
    <location>
        <begin position="473"/>
        <end position="495"/>
    </location>
</feature>
<feature type="compositionally biased region" description="Polar residues" evidence="5">
    <location>
        <begin position="679"/>
        <end position="695"/>
    </location>
</feature>
<feature type="compositionally biased region" description="Low complexity" evidence="5">
    <location>
        <begin position="697"/>
        <end position="709"/>
    </location>
</feature>
<feature type="compositionally biased region" description="Basic and acidic residues" evidence="5">
    <location>
        <begin position="843"/>
        <end position="858"/>
    </location>
</feature>
<feature type="compositionally biased region" description="Basic residues" evidence="5">
    <location>
        <begin position="882"/>
        <end position="892"/>
    </location>
</feature>
<feature type="compositionally biased region" description="Basic residues" evidence="5">
    <location>
        <begin position="905"/>
        <end position="922"/>
    </location>
</feature>
<feature type="compositionally biased region" description="Basic residues" evidence="5">
    <location>
        <begin position="934"/>
        <end position="946"/>
    </location>
</feature>
<feature type="compositionally biased region" description="Basic and acidic residues" evidence="5">
    <location>
        <begin position="947"/>
        <end position="974"/>
    </location>
</feature>
<feature type="compositionally biased region" description="Basic residues" evidence="5">
    <location>
        <begin position="975"/>
        <end position="984"/>
    </location>
</feature>
<keyword id="KW-0175">Coiled coil</keyword>
<keyword id="KW-0341">Growth regulation</keyword>
<keyword id="KW-0507">mRNA processing</keyword>
<keyword id="KW-0539">Nucleus</keyword>
<keyword id="KW-1185">Reference proteome</keyword>
<keyword id="KW-0694">RNA-binding</keyword>
<keyword id="KW-0943">RNA-mediated gene silencing</keyword>
<protein>
    <recommendedName>
        <fullName>G patch domain-containing protein TGH homolog</fullName>
    </recommendedName>
    <alternativeName>
        <fullName>Protein TOUGH homolog</fullName>
    </alternativeName>
</protein>
<proteinExistence type="evidence at transcript level"/>